<gene>
    <name evidence="1" type="primary">hemL</name>
    <name type="ordered locus">VCM66_0584</name>
</gene>
<dbReference type="EC" id="5.4.3.8" evidence="1"/>
<dbReference type="EMBL" id="CP001233">
    <property type="protein sequence ID" value="ACP04907.1"/>
    <property type="molecule type" value="Genomic_DNA"/>
</dbReference>
<dbReference type="RefSeq" id="WP_000167257.1">
    <property type="nucleotide sequence ID" value="NC_012578.1"/>
</dbReference>
<dbReference type="SMR" id="C3LSN1"/>
<dbReference type="GeneID" id="89515223"/>
<dbReference type="KEGG" id="vcm:VCM66_0584"/>
<dbReference type="HOGENOM" id="CLU_016922_1_5_6"/>
<dbReference type="UniPathway" id="UPA00251">
    <property type="reaction ID" value="UER00317"/>
</dbReference>
<dbReference type="Proteomes" id="UP000001217">
    <property type="component" value="Chromosome I"/>
</dbReference>
<dbReference type="GO" id="GO:0005737">
    <property type="term" value="C:cytoplasm"/>
    <property type="evidence" value="ECO:0007669"/>
    <property type="project" value="UniProtKB-SubCell"/>
</dbReference>
<dbReference type="GO" id="GO:0042286">
    <property type="term" value="F:glutamate-1-semialdehyde 2,1-aminomutase activity"/>
    <property type="evidence" value="ECO:0007669"/>
    <property type="project" value="UniProtKB-UniRule"/>
</dbReference>
<dbReference type="GO" id="GO:0030170">
    <property type="term" value="F:pyridoxal phosphate binding"/>
    <property type="evidence" value="ECO:0007669"/>
    <property type="project" value="InterPro"/>
</dbReference>
<dbReference type="GO" id="GO:0008483">
    <property type="term" value="F:transaminase activity"/>
    <property type="evidence" value="ECO:0007669"/>
    <property type="project" value="InterPro"/>
</dbReference>
<dbReference type="GO" id="GO:0006782">
    <property type="term" value="P:protoporphyrinogen IX biosynthetic process"/>
    <property type="evidence" value="ECO:0007669"/>
    <property type="project" value="UniProtKB-UniRule"/>
</dbReference>
<dbReference type="CDD" id="cd00610">
    <property type="entry name" value="OAT_like"/>
    <property type="match status" value="1"/>
</dbReference>
<dbReference type="FunFam" id="3.40.640.10:FF:000021">
    <property type="entry name" value="Glutamate-1-semialdehyde 2,1-aminomutase"/>
    <property type="match status" value="1"/>
</dbReference>
<dbReference type="FunFam" id="3.90.1150.10:FF:000012">
    <property type="entry name" value="Glutamate-1-semialdehyde 2,1-aminomutase"/>
    <property type="match status" value="1"/>
</dbReference>
<dbReference type="Gene3D" id="3.90.1150.10">
    <property type="entry name" value="Aspartate Aminotransferase, domain 1"/>
    <property type="match status" value="1"/>
</dbReference>
<dbReference type="Gene3D" id="3.40.640.10">
    <property type="entry name" value="Type I PLP-dependent aspartate aminotransferase-like (Major domain)"/>
    <property type="match status" value="1"/>
</dbReference>
<dbReference type="HAMAP" id="MF_00375">
    <property type="entry name" value="HemL_aminotrans_3"/>
    <property type="match status" value="1"/>
</dbReference>
<dbReference type="InterPro" id="IPR004639">
    <property type="entry name" value="4pyrrol_synth_GluAld_NH2Trfase"/>
</dbReference>
<dbReference type="InterPro" id="IPR005814">
    <property type="entry name" value="Aminotrans_3"/>
</dbReference>
<dbReference type="InterPro" id="IPR049704">
    <property type="entry name" value="Aminotrans_3_PPA_site"/>
</dbReference>
<dbReference type="InterPro" id="IPR015424">
    <property type="entry name" value="PyrdxlP-dep_Trfase"/>
</dbReference>
<dbReference type="InterPro" id="IPR015421">
    <property type="entry name" value="PyrdxlP-dep_Trfase_major"/>
</dbReference>
<dbReference type="InterPro" id="IPR015422">
    <property type="entry name" value="PyrdxlP-dep_Trfase_small"/>
</dbReference>
<dbReference type="NCBIfam" id="TIGR00713">
    <property type="entry name" value="hemL"/>
    <property type="match status" value="1"/>
</dbReference>
<dbReference type="NCBIfam" id="NF000818">
    <property type="entry name" value="PRK00062.1"/>
    <property type="match status" value="1"/>
</dbReference>
<dbReference type="PANTHER" id="PTHR43713">
    <property type="entry name" value="GLUTAMATE-1-SEMIALDEHYDE 2,1-AMINOMUTASE"/>
    <property type="match status" value="1"/>
</dbReference>
<dbReference type="PANTHER" id="PTHR43713:SF3">
    <property type="entry name" value="GLUTAMATE-1-SEMIALDEHYDE 2,1-AMINOMUTASE 1, CHLOROPLASTIC-RELATED"/>
    <property type="match status" value="1"/>
</dbReference>
<dbReference type="Pfam" id="PF00202">
    <property type="entry name" value="Aminotran_3"/>
    <property type="match status" value="1"/>
</dbReference>
<dbReference type="SUPFAM" id="SSF53383">
    <property type="entry name" value="PLP-dependent transferases"/>
    <property type="match status" value="1"/>
</dbReference>
<dbReference type="PROSITE" id="PS00600">
    <property type="entry name" value="AA_TRANSFER_CLASS_3"/>
    <property type="match status" value="1"/>
</dbReference>
<feature type="chain" id="PRO_1000201038" description="Glutamate-1-semialdehyde 2,1-aminomutase">
    <location>
        <begin position="1"/>
        <end position="432"/>
    </location>
</feature>
<feature type="modified residue" description="N6-(pyridoxal phosphate)lysine" evidence="1">
    <location>
        <position position="265"/>
    </location>
</feature>
<reference key="1">
    <citation type="journal article" date="2008" name="PLoS ONE">
        <title>A recalibrated molecular clock and independent origins for the cholera pandemic clones.</title>
        <authorList>
            <person name="Feng L."/>
            <person name="Reeves P.R."/>
            <person name="Lan R."/>
            <person name="Ren Y."/>
            <person name="Gao C."/>
            <person name="Zhou Z."/>
            <person name="Ren Y."/>
            <person name="Cheng J."/>
            <person name="Wang W."/>
            <person name="Wang J."/>
            <person name="Qian W."/>
            <person name="Li D."/>
            <person name="Wang L."/>
        </authorList>
    </citation>
    <scope>NUCLEOTIDE SEQUENCE [LARGE SCALE GENOMIC DNA]</scope>
    <source>
        <strain>M66-2</strain>
    </source>
</reference>
<keyword id="KW-0963">Cytoplasm</keyword>
<keyword id="KW-0413">Isomerase</keyword>
<keyword id="KW-0627">Porphyrin biosynthesis</keyword>
<keyword id="KW-0663">Pyridoxal phosphate</keyword>
<organism>
    <name type="scientific">Vibrio cholerae serotype O1 (strain M66-2)</name>
    <dbReference type="NCBI Taxonomy" id="579112"/>
    <lineage>
        <taxon>Bacteria</taxon>
        <taxon>Pseudomonadati</taxon>
        <taxon>Pseudomonadota</taxon>
        <taxon>Gammaproteobacteria</taxon>
        <taxon>Vibrionales</taxon>
        <taxon>Vibrionaceae</taxon>
        <taxon>Vibrio</taxon>
    </lineage>
</organism>
<accession>C3LSN1</accession>
<comment type="catalytic activity">
    <reaction evidence="1">
        <text>(S)-4-amino-5-oxopentanoate = 5-aminolevulinate</text>
        <dbReference type="Rhea" id="RHEA:14265"/>
        <dbReference type="ChEBI" id="CHEBI:57501"/>
        <dbReference type="ChEBI" id="CHEBI:356416"/>
        <dbReference type="EC" id="5.4.3.8"/>
    </reaction>
</comment>
<comment type="cofactor">
    <cofactor evidence="1">
        <name>pyridoxal 5'-phosphate</name>
        <dbReference type="ChEBI" id="CHEBI:597326"/>
    </cofactor>
</comment>
<comment type="pathway">
    <text evidence="1">Porphyrin-containing compound metabolism; protoporphyrin-IX biosynthesis; 5-aminolevulinate from L-glutamyl-tRNA(Glu): step 2/2.</text>
</comment>
<comment type="subunit">
    <text evidence="1">Homodimer.</text>
</comment>
<comment type="subcellular location">
    <subcellularLocation>
        <location evidence="1">Cytoplasm</location>
    </subcellularLocation>
</comment>
<comment type="similarity">
    <text evidence="1">Belongs to the class-III pyridoxal-phosphate-dependent aminotransferase family. HemL subfamily.</text>
</comment>
<evidence type="ECO:0000255" key="1">
    <source>
        <dbReference type="HAMAP-Rule" id="MF_00375"/>
    </source>
</evidence>
<name>GSA_VIBCM</name>
<sequence length="432" mass="46182">MTKSAELYQKAQTTIPGGVNSPVRAFNGVGGSPIFIDRADGALIFDADGKAYIDYVGSWGPMILGHNHAVIREAVIQAAQRGLSFGAPTEMEITMAELVSELVPSMEQLRMVNSGTEATMSAIRLARGYTGRDKIIKFEGCYHGHADSLLVKAGSGALTLGQPSSPGVPADFAKHTLTARFNDLDSVRELFAANQGEIACIIVEPVAGNMNCIPPVEGFHEGLREICDQEGALLIFDEVMTGFRVALGGAQAHYNIKPDLTTLGKVIGGGMPVGAFGGRREVMQYIAPTGPVYQAGTLSGNPIAMAAGYACLNLLREEGNEKRLAAKTKQLADGFKSLADQHGIPLLVHQVGGMFGFFFTEQETVTCYEDVARCDVERFKRFFHLMLQHGVYLAPSAFEASFTSLAHGSKEIEATLEAADRSFAILAAEAKA</sequence>
<protein>
    <recommendedName>
        <fullName evidence="1">Glutamate-1-semialdehyde 2,1-aminomutase</fullName>
        <shortName evidence="1">GSA</shortName>
        <ecNumber evidence="1">5.4.3.8</ecNumber>
    </recommendedName>
    <alternativeName>
        <fullName evidence="1">Glutamate-1-semialdehyde aminotransferase</fullName>
        <shortName evidence="1">GSA-AT</shortName>
    </alternativeName>
</protein>
<proteinExistence type="inferred from homology"/>